<protein>
    <recommendedName>
        <fullName evidence="2">tRNA (guanine-N(7)-)-methyltransferase</fullName>
        <ecNumber evidence="2">2.1.1.33</ecNumber>
    </recommendedName>
    <alternativeName>
        <fullName evidence="2">Transfer RNA methyltransferase 8</fullName>
    </alternativeName>
    <alternativeName>
        <fullName evidence="2">tRNA (guanine(46)-N(7))-methyltransferase</fullName>
    </alternativeName>
    <alternativeName>
        <fullName evidence="2">tRNA(m7G46)-methyltransferase</fullName>
    </alternativeName>
</protein>
<sequence length="286" mass="33391">MKAKPLSQDPGSKRYAYRINKEENRKELKHVKINESSLVQEGQKIDLPKKRYYRQRAHSNPFSDHQLEYPVSPQDMDWSKLYPYYKNAENGQMTKKVTIADIGCGFGGLMIDLSPAFPEDLILGMEIRVQVTNYVEDRIIALRNNTASKHGFQNINVLRGNAMKFLPNFFEKGQLSKMFFCFPDPHFKQRKHKARIITNTLLSEYAYVLKEGGVVYTITDVKDLHEWMVKHLEEHPLFERLSKEWEENDECVKIMRNATEEGKKVERKKGDKFVACFTRLPTPAIL</sequence>
<comment type="function">
    <text evidence="2">Methyltransferase that catalyzes the formation of N(7)-methylguanine at position 46 (m7G46) in tRNA, a modification required to maintain stability of tRNAs; its absence resulting in tRNA decay. Both the D-stem and T-stem structures of tRNAs are required for efficient methyltransferase activity.</text>
</comment>
<comment type="catalytic activity">
    <reaction evidence="2">
        <text>guanosine(46) in tRNA + S-adenosyl-L-methionine = N(7)-methylguanosine(46) in tRNA + S-adenosyl-L-homocysteine</text>
        <dbReference type="Rhea" id="RHEA:42708"/>
        <dbReference type="Rhea" id="RHEA-COMP:10188"/>
        <dbReference type="Rhea" id="RHEA-COMP:10189"/>
        <dbReference type="ChEBI" id="CHEBI:57856"/>
        <dbReference type="ChEBI" id="CHEBI:59789"/>
        <dbReference type="ChEBI" id="CHEBI:74269"/>
        <dbReference type="ChEBI" id="CHEBI:74480"/>
        <dbReference type="EC" id="2.1.1.33"/>
    </reaction>
</comment>
<comment type="pathway">
    <text evidence="2">tRNA modification; N(7)-methylguanine-tRNA biosynthesis.</text>
</comment>
<comment type="subunit">
    <text evidence="2">Forms a complex with TRM82.</text>
</comment>
<comment type="subcellular location">
    <subcellularLocation>
        <location evidence="2">Nucleus</location>
    </subcellularLocation>
</comment>
<comment type="similarity">
    <text evidence="2">Belongs to the class I-like SAM-binding methyltransferase superfamily. TrmB family.</text>
</comment>
<accession>B3LH81</accession>
<feature type="chain" id="PRO_0000370607" description="tRNA (guanine-N(7)-)-methyltransferase">
    <location>
        <begin position="1"/>
        <end position="286"/>
    </location>
</feature>
<feature type="active site" evidence="2">
    <location>
        <position position="184"/>
    </location>
</feature>
<feature type="binding site" evidence="2">
    <location>
        <position position="103"/>
    </location>
    <ligand>
        <name>S-adenosyl-L-methionine</name>
        <dbReference type="ChEBI" id="CHEBI:59789"/>
    </ligand>
</feature>
<feature type="binding site" evidence="2">
    <location>
        <begin position="126"/>
        <end position="127"/>
    </location>
    <ligand>
        <name>S-adenosyl-L-methionine</name>
        <dbReference type="ChEBI" id="CHEBI:59789"/>
    </ligand>
</feature>
<feature type="binding site" evidence="2">
    <location>
        <begin position="161"/>
        <end position="162"/>
    </location>
    <ligand>
        <name>S-adenosyl-L-methionine</name>
        <dbReference type="ChEBI" id="CHEBI:59789"/>
    </ligand>
</feature>
<feature type="binding site" evidence="2">
    <location>
        <position position="181"/>
    </location>
    <ligand>
        <name>S-adenosyl-L-methionine</name>
        <dbReference type="ChEBI" id="CHEBI:59789"/>
    </ligand>
</feature>
<feature type="binding site" evidence="2">
    <location>
        <begin position="259"/>
        <end position="261"/>
    </location>
    <ligand>
        <name>S-adenosyl-L-methionine</name>
        <dbReference type="ChEBI" id="CHEBI:59789"/>
    </ligand>
</feature>
<feature type="modified residue" description="Phosphoserine" evidence="1">
    <location>
        <position position="7"/>
    </location>
</feature>
<feature type="modified residue" description="Phosphoserine" evidence="1">
    <location>
        <position position="59"/>
    </location>
</feature>
<evidence type="ECO:0000250" key="1">
    <source>
        <dbReference type="UniProtKB" id="Q12009"/>
    </source>
</evidence>
<evidence type="ECO:0000255" key="2">
    <source>
        <dbReference type="HAMAP-Rule" id="MF_03055"/>
    </source>
</evidence>
<proteinExistence type="inferred from homology"/>
<gene>
    <name evidence="2" type="primary">TRM8</name>
    <name type="ORF">SCRG_00691</name>
</gene>
<organism>
    <name type="scientific">Saccharomyces cerevisiae (strain RM11-1a)</name>
    <name type="common">Baker's yeast</name>
    <dbReference type="NCBI Taxonomy" id="285006"/>
    <lineage>
        <taxon>Eukaryota</taxon>
        <taxon>Fungi</taxon>
        <taxon>Dikarya</taxon>
        <taxon>Ascomycota</taxon>
        <taxon>Saccharomycotina</taxon>
        <taxon>Saccharomycetes</taxon>
        <taxon>Saccharomycetales</taxon>
        <taxon>Saccharomycetaceae</taxon>
        <taxon>Saccharomyces</taxon>
    </lineage>
</organism>
<dbReference type="EC" id="2.1.1.33" evidence="2"/>
<dbReference type="EMBL" id="CH408043">
    <property type="protein sequence ID" value="EDV08460.1"/>
    <property type="molecule type" value="Genomic_DNA"/>
</dbReference>
<dbReference type="SMR" id="B3LH81"/>
<dbReference type="HOGENOM" id="CLU_050910_3_1_1"/>
<dbReference type="OrthoDB" id="11717at4893"/>
<dbReference type="UniPathway" id="UPA00989"/>
<dbReference type="Proteomes" id="UP000008335">
    <property type="component" value="Unassembled WGS sequence"/>
</dbReference>
<dbReference type="GO" id="GO:0005634">
    <property type="term" value="C:nucleus"/>
    <property type="evidence" value="ECO:0007669"/>
    <property type="project" value="UniProtKB-SubCell"/>
</dbReference>
<dbReference type="GO" id="GO:0043527">
    <property type="term" value="C:tRNA methyltransferase complex"/>
    <property type="evidence" value="ECO:0007669"/>
    <property type="project" value="TreeGrafter"/>
</dbReference>
<dbReference type="GO" id="GO:0008176">
    <property type="term" value="F:tRNA (guanine(46)-N7)-methyltransferase activity"/>
    <property type="evidence" value="ECO:0007669"/>
    <property type="project" value="UniProtKB-UniRule"/>
</dbReference>
<dbReference type="GO" id="GO:0000049">
    <property type="term" value="F:tRNA binding"/>
    <property type="evidence" value="ECO:0007669"/>
    <property type="project" value="UniProtKB-UniRule"/>
</dbReference>
<dbReference type="CDD" id="cd02440">
    <property type="entry name" value="AdoMet_MTases"/>
    <property type="match status" value="1"/>
</dbReference>
<dbReference type="FunFam" id="3.40.50.150:FF:000060">
    <property type="entry name" value="tRNA (guanine-N(7)-)-methyltransferase"/>
    <property type="match status" value="1"/>
</dbReference>
<dbReference type="Gene3D" id="3.40.50.150">
    <property type="entry name" value="Vaccinia Virus protein VP39"/>
    <property type="match status" value="1"/>
</dbReference>
<dbReference type="HAMAP" id="MF_03055">
    <property type="entry name" value="tRNA_methyltr_TrmB_euk"/>
    <property type="match status" value="1"/>
</dbReference>
<dbReference type="InterPro" id="IPR029063">
    <property type="entry name" value="SAM-dependent_MTases_sf"/>
</dbReference>
<dbReference type="InterPro" id="IPR025763">
    <property type="entry name" value="Trm8_euk"/>
</dbReference>
<dbReference type="InterPro" id="IPR003358">
    <property type="entry name" value="tRNA_(Gua-N-7)_MeTrfase_Trmb"/>
</dbReference>
<dbReference type="NCBIfam" id="TIGR00091">
    <property type="entry name" value="tRNA (guanosine(46)-N7)-methyltransferase TrmB"/>
    <property type="match status" value="1"/>
</dbReference>
<dbReference type="PANTHER" id="PTHR23417">
    <property type="entry name" value="3-DEOXY-D-MANNO-OCTULOSONIC-ACID TRANSFERASE/TRNA GUANINE-N 7 - -METHYLTRANSFERASE"/>
    <property type="match status" value="1"/>
</dbReference>
<dbReference type="PANTHER" id="PTHR23417:SF16">
    <property type="entry name" value="TRNA (GUANINE-N(7)-)-METHYLTRANSFERASE"/>
    <property type="match status" value="1"/>
</dbReference>
<dbReference type="Pfam" id="PF02390">
    <property type="entry name" value="Methyltransf_4"/>
    <property type="match status" value="1"/>
</dbReference>
<dbReference type="SUPFAM" id="SSF53335">
    <property type="entry name" value="S-adenosyl-L-methionine-dependent methyltransferases"/>
    <property type="match status" value="1"/>
</dbReference>
<dbReference type="PROSITE" id="PS51625">
    <property type="entry name" value="SAM_MT_TRMB"/>
    <property type="match status" value="1"/>
</dbReference>
<name>TRMB_YEAS1</name>
<keyword id="KW-0489">Methyltransferase</keyword>
<keyword id="KW-0539">Nucleus</keyword>
<keyword id="KW-0597">Phosphoprotein</keyword>
<keyword id="KW-0694">RNA-binding</keyword>
<keyword id="KW-0949">S-adenosyl-L-methionine</keyword>
<keyword id="KW-0808">Transferase</keyword>
<keyword id="KW-0819">tRNA processing</keyword>
<keyword id="KW-0820">tRNA-binding</keyword>
<reference key="1">
    <citation type="submission" date="2005-03" db="EMBL/GenBank/DDBJ databases">
        <title>Annotation of the Saccharomyces cerevisiae RM11-1a genome.</title>
        <authorList>
            <consortium name="The Broad Institute Genome Sequencing Platform"/>
            <person name="Birren B.W."/>
            <person name="Lander E.S."/>
            <person name="Galagan J.E."/>
            <person name="Nusbaum C."/>
            <person name="Devon K."/>
            <person name="Cuomo C."/>
            <person name="Jaffe D.B."/>
            <person name="Butler J."/>
            <person name="Alvarez P."/>
            <person name="Gnerre S."/>
            <person name="Grabherr M."/>
            <person name="Kleber M."/>
            <person name="Mauceli E.W."/>
            <person name="Brockman W."/>
            <person name="MacCallum I.A."/>
            <person name="Rounsley S."/>
            <person name="Young S.K."/>
            <person name="LaButti K."/>
            <person name="Pushparaj V."/>
            <person name="DeCaprio D."/>
            <person name="Crawford M."/>
            <person name="Koehrsen M."/>
            <person name="Engels R."/>
            <person name="Montgomery P."/>
            <person name="Pearson M."/>
            <person name="Howarth C."/>
            <person name="Larson L."/>
            <person name="Luoma S."/>
            <person name="White J."/>
            <person name="O'Leary S."/>
            <person name="Kodira C.D."/>
            <person name="Zeng Q."/>
            <person name="Yandava C."/>
            <person name="Alvarado L."/>
            <person name="Pratt S."/>
            <person name="Kruglyak L."/>
        </authorList>
    </citation>
    <scope>NUCLEOTIDE SEQUENCE [LARGE SCALE GENOMIC DNA]</scope>
    <source>
        <strain>RM11-1a</strain>
    </source>
</reference>